<proteinExistence type="evidence at protein level"/>
<accession>P85742</accession>
<protein>
    <recommendedName>
        <fullName evidence="1">Hypertrehalosaemic factor</fullName>
    </recommendedName>
    <alternativeName>
        <fullName evidence="4">Adipokinetic hormone 1</fullName>
        <shortName evidence="4">PolAe-AKH-1</shortName>
    </alternativeName>
    <alternativeName>
        <fullName evidence="1">Hypertrehalosaemic neuropeptide</fullName>
    </alternativeName>
</protein>
<evidence type="ECO:0000250" key="1">
    <source>
        <dbReference type="UniProtKB" id="P67790"/>
    </source>
</evidence>
<evidence type="ECO:0000255" key="2"/>
<evidence type="ECO:0000269" key="3">
    <source>
    </source>
</evidence>
<evidence type="ECO:0000303" key="4">
    <source>
    </source>
</evidence>
<evidence type="ECO:0000305" key="5"/>
<feature type="peptide" id="PRO_0000378666" description="Hypertrehalosaemic factor" evidence="3">
    <location>
        <begin position="1"/>
        <end position="8"/>
    </location>
</feature>
<feature type="modified residue" description="Pyrrolidone carboxylic acid" evidence="3">
    <location>
        <position position="1"/>
    </location>
</feature>
<feature type="modified residue" description="Tryptophan amide" evidence="3">
    <location>
        <position position="8"/>
    </location>
</feature>
<sequence length="8" mass="1005">QLNFSPNW</sequence>
<organism>
    <name type="scientific">Polyphaga aegyptiaca</name>
    <name type="common">Egyptian desert roach</name>
    <dbReference type="NCBI Taxonomy" id="7085"/>
    <lineage>
        <taxon>Eukaryota</taxon>
        <taxon>Metazoa</taxon>
        <taxon>Ecdysozoa</taxon>
        <taxon>Arthropoda</taxon>
        <taxon>Hexapoda</taxon>
        <taxon>Insecta</taxon>
        <taxon>Pterygota</taxon>
        <taxon>Neoptera</taxon>
        <taxon>Polyneoptera</taxon>
        <taxon>Dictyoptera</taxon>
        <taxon>Blattodea</taxon>
        <taxon>Corydioidea</taxon>
        <taxon>Corydiidae</taxon>
        <taxon>Polyphaga</taxon>
    </lineage>
</organism>
<keyword id="KW-0027">Amidation</keyword>
<keyword id="KW-0903">Direct protein sequencing</keyword>
<keyword id="KW-0372">Hormone</keyword>
<keyword id="KW-0527">Neuropeptide</keyword>
<keyword id="KW-0873">Pyrrolidone carboxylic acid</keyword>
<keyword id="KW-0964">Secreted</keyword>
<comment type="function">
    <text evidence="5">Hypertrehalosaemic factors are neuropeptides that elevate the level of trehalose in the hemolymph (trehalose is the major carbohydrate in the hemolymph of insects).</text>
</comment>
<comment type="subcellular location">
    <subcellularLocation>
        <location evidence="5">Secreted</location>
    </subcellularLocation>
</comment>
<comment type="similarity">
    <text evidence="2">Belongs to the AKH/HRTH/RPCH family.</text>
</comment>
<reference evidence="5" key="1">
    <citation type="journal article" date="2009" name="BMC Evol. Biol.">
        <title>A proteomic approach for studying insect phylogeny: CAPA peptides of ancient insect taxa (Dictyoptera, Blattoptera) as a test case.</title>
        <authorList>
            <person name="Roth S."/>
            <person name="Fromm B."/>
            <person name="Gaede G."/>
            <person name="Predel R."/>
        </authorList>
    </citation>
    <scope>PROTEIN SEQUENCE</scope>
    <scope>PYROGLUTAMATE FORMATION AT GLN-1</scope>
    <scope>AMIDATION AT TRP-8</scope>
    <source>
        <tissue evidence="3">Corpora cardiaca</tissue>
    </source>
</reference>
<dbReference type="GO" id="GO:0005576">
    <property type="term" value="C:extracellular region"/>
    <property type="evidence" value="ECO:0007669"/>
    <property type="project" value="UniProtKB-SubCell"/>
</dbReference>
<dbReference type="GO" id="GO:0005179">
    <property type="term" value="F:hormone activity"/>
    <property type="evidence" value="ECO:0007669"/>
    <property type="project" value="UniProtKB-KW"/>
</dbReference>
<dbReference type="GO" id="GO:0007218">
    <property type="term" value="P:neuropeptide signaling pathway"/>
    <property type="evidence" value="ECO:0007669"/>
    <property type="project" value="UniProtKB-KW"/>
</dbReference>
<dbReference type="InterPro" id="IPR002047">
    <property type="entry name" value="Adipokinetic_hormone_CS"/>
</dbReference>
<dbReference type="PROSITE" id="PS00256">
    <property type="entry name" value="AKH"/>
    <property type="match status" value="1"/>
</dbReference>
<name>HTF_POLAY</name>